<organism>
    <name type="scientific">Campylobacter jejuni subsp. jejuni serotype O:23/36 (strain 81-176)</name>
    <dbReference type="NCBI Taxonomy" id="354242"/>
    <lineage>
        <taxon>Bacteria</taxon>
        <taxon>Pseudomonadati</taxon>
        <taxon>Campylobacterota</taxon>
        <taxon>Epsilonproteobacteria</taxon>
        <taxon>Campylobacterales</taxon>
        <taxon>Campylobacteraceae</taxon>
        <taxon>Campylobacter</taxon>
    </lineage>
</organism>
<evidence type="ECO:0000255" key="1">
    <source>
        <dbReference type="HAMAP-Rule" id="MF_01334"/>
    </source>
</evidence>
<evidence type="ECO:0000305" key="2"/>
<gene>
    <name evidence="1" type="primary">rplY</name>
    <name evidence="1" type="synonym">ctc</name>
    <name type="ordered locus">CJJ81176_0333</name>
</gene>
<proteinExistence type="inferred from homology"/>
<sequence>MLEGIVRESIGRKAAKALKRDGYLIANIYGKGLENINAAFKVNEFIKEVRKKTTLIFDVKVGSQTLSVVVVDYQKDSVTAELKHVDLKVAQKGVISKYMVPVKITGTAIGLKNKGVLIQSKRRLKVKCAAENLPNFFELDVSKLDVGDALLVRDIVVPAGVTMIDADRVAVVGVEKAR</sequence>
<comment type="function">
    <text evidence="1">This is one of the proteins that binds to the 5S RNA in the ribosome where it forms part of the central protuberance.</text>
</comment>
<comment type="subunit">
    <text evidence="1">Part of the 50S ribosomal subunit; part of the 5S rRNA/L5/L18/L25 subcomplex. Contacts the 5S rRNA. Binds to the 5S rRNA independently of L5 and L18.</text>
</comment>
<comment type="similarity">
    <text evidence="1">Belongs to the bacterial ribosomal protein bL25 family. CTC subfamily.</text>
</comment>
<accession>A1VY30</accession>
<dbReference type="EMBL" id="CP000538">
    <property type="protein sequence ID" value="EAQ73186.1"/>
    <property type="molecule type" value="Genomic_DNA"/>
</dbReference>
<dbReference type="RefSeq" id="WP_002859854.1">
    <property type="nucleotide sequence ID" value="NC_008787.1"/>
</dbReference>
<dbReference type="SMR" id="A1VY30"/>
<dbReference type="KEGG" id="cjj:CJJ81176_0333"/>
<dbReference type="eggNOG" id="COG1825">
    <property type="taxonomic scope" value="Bacteria"/>
</dbReference>
<dbReference type="HOGENOM" id="CLU_075939_2_2_7"/>
<dbReference type="Proteomes" id="UP000000646">
    <property type="component" value="Chromosome"/>
</dbReference>
<dbReference type="GO" id="GO:0022625">
    <property type="term" value="C:cytosolic large ribosomal subunit"/>
    <property type="evidence" value="ECO:0007669"/>
    <property type="project" value="TreeGrafter"/>
</dbReference>
<dbReference type="GO" id="GO:0008097">
    <property type="term" value="F:5S rRNA binding"/>
    <property type="evidence" value="ECO:0007669"/>
    <property type="project" value="InterPro"/>
</dbReference>
<dbReference type="GO" id="GO:0003735">
    <property type="term" value="F:structural constituent of ribosome"/>
    <property type="evidence" value="ECO:0007669"/>
    <property type="project" value="InterPro"/>
</dbReference>
<dbReference type="GO" id="GO:0006412">
    <property type="term" value="P:translation"/>
    <property type="evidence" value="ECO:0007669"/>
    <property type="project" value="UniProtKB-UniRule"/>
</dbReference>
<dbReference type="CDD" id="cd00495">
    <property type="entry name" value="Ribosomal_L25_TL5_CTC"/>
    <property type="match status" value="1"/>
</dbReference>
<dbReference type="Gene3D" id="2.170.120.20">
    <property type="entry name" value="Ribosomal protein L25, beta domain"/>
    <property type="match status" value="1"/>
</dbReference>
<dbReference type="Gene3D" id="2.40.240.10">
    <property type="entry name" value="Ribosomal Protein L25, Chain P"/>
    <property type="match status" value="1"/>
</dbReference>
<dbReference type="HAMAP" id="MF_01334">
    <property type="entry name" value="Ribosomal_bL25_CTC"/>
    <property type="match status" value="1"/>
</dbReference>
<dbReference type="InterPro" id="IPR020056">
    <property type="entry name" value="Rbsml_bL25/Gln-tRNA_synth_N"/>
</dbReference>
<dbReference type="InterPro" id="IPR011035">
    <property type="entry name" value="Ribosomal_bL25/Gln-tRNA_synth"/>
</dbReference>
<dbReference type="InterPro" id="IPR020057">
    <property type="entry name" value="Ribosomal_bL25_b-dom"/>
</dbReference>
<dbReference type="InterPro" id="IPR037121">
    <property type="entry name" value="Ribosomal_bL25_C"/>
</dbReference>
<dbReference type="InterPro" id="IPR001021">
    <property type="entry name" value="Ribosomal_bL25_long"/>
</dbReference>
<dbReference type="InterPro" id="IPR029751">
    <property type="entry name" value="Ribosomal_L25_dom"/>
</dbReference>
<dbReference type="InterPro" id="IPR020930">
    <property type="entry name" value="Ribosomal_uL5_bac-type"/>
</dbReference>
<dbReference type="NCBIfam" id="TIGR00731">
    <property type="entry name" value="bL25_bact_ctc"/>
    <property type="match status" value="1"/>
</dbReference>
<dbReference type="NCBIfam" id="NF004129">
    <property type="entry name" value="PRK05618.1-4"/>
    <property type="match status" value="1"/>
</dbReference>
<dbReference type="PANTHER" id="PTHR33284">
    <property type="entry name" value="RIBOSOMAL PROTEIN L25/GLN-TRNA SYNTHETASE, ANTI-CODON-BINDING DOMAIN-CONTAINING PROTEIN"/>
    <property type="match status" value="1"/>
</dbReference>
<dbReference type="PANTHER" id="PTHR33284:SF1">
    <property type="entry name" value="RIBOSOMAL PROTEIN L25_GLN-TRNA SYNTHETASE, ANTI-CODON-BINDING DOMAIN-CONTAINING PROTEIN"/>
    <property type="match status" value="1"/>
</dbReference>
<dbReference type="Pfam" id="PF01386">
    <property type="entry name" value="Ribosomal_L25p"/>
    <property type="match status" value="1"/>
</dbReference>
<dbReference type="Pfam" id="PF14693">
    <property type="entry name" value="Ribosomal_TL5_C"/>
    <property type="match status" value="1"/>
</dbReference>
<dbReference type="SUPFAM" id="SSF50715">
    <property type="entry name" value="Ribosomal protein L25-like"/>
    <property type="match status" value="1"/>
</dbReference>
<reference key="1">
    <citation type="submission" date="2006-12" db="EMBL/GenBank/DDBJ databases">
        <authorList>
            <person name="Fouts D.E."/>
            <person name="Nelson K.E."/>
            <person name="Sebastian Y."/>
        </authorList>
    </citation>
    <scope>NUCLEOTIDE SEQUENCE [LARGE SCALE GENOMIC DNA]</scope>
    <source>
        <strain>81-176</strain>
    </source>
</reference>
<name>RL25_CAMJJ</name>
<protein>
    <recommendedName>
        <fullName evidence="1">Large ribosomal subunit protein bL25</fullName>
    </recommendedName>
    <alternativeName>
        <fullName evidence="2">50S ribosomal protein L25</fullName>
    </alternativeName>
    <alternativeName>
        <fullName evidence="1">General stress protein CTC</fullName>
    </alternativeName>
</protein>
<keyword id="KW-0687">Ribonucleoprotein</keyword>
<keyword id="KW-0689">Ribosomal protein</keyword>
<keyword id="KW-0694">RNA-binding</keyword>
<keyword id="KW-0699">rRNA-binding</keyword>
<feature type="chain" id="PRO_1000052881" description="Large ribosomal subunit protein bL25">
    <location>
        <begin position="1"/>
        <end position="178"/>
    </location>
</feature>